<protein>
    <recommendedName>
        <fullName>Sprouty-related, EVH1 domain-containing protein 2</fullName>
        <shortName>Spred-2</shortName>
    </recommendedName>
</protein>
<accession>Q5Y171</accession>
<comment type="function">
    <text evidence="1">Negatively regulates Ras signaling pathways and downstream activation of MAP kinases.</text>
</comment>
<comment type="subcellular location">
    <subcellularLocation>
        <location evidence="2">Cell membrane</location>
        <topology evidence="2">Peripheral membrane protein</topology>
        <orientation evidence="2">Cytoplasmic side</orientation>
    </subcellularLocation>
    <subcellularLocation>
        <location evidence="1">Cytoplasmic vesicle</location>
        <location evidence="1">Secretory vesicle membrane</location>
        <topology evidence="1">Peripheral membrane protein</topology>
        <orientation evidence="1">Cytoplasmic side</orientation>
    </subcellularLocation>
    <subcellularLocation>
        <location evidence="1">Cytoplasm</location>
    </subcellularLocation>
</comment>
<reference key="1">
    <citation type="submission" date="2004-08" db="EMBL/GenBank/DDBJ databases">
        <title>Sprouty and Spred proteins diverge functionally to coordinate FGF signal interpretation during mesoderm formation.</title>
        <authorList>
            <person name="Sivak J.M."/>
            <person name="Petersen L.F."/>
            <person name="Amaya E."/>
        </authorList>
    </citation>
    <scope>NUCLEOTIDE SEQUENCE [MRNA]</scope>
</reference>
<name>SPRE2_XENTR</name>
<proteinExistence type="evidence at transcript level"/>
<feature type="chain" id="PRO_0000076912" description="Sprouty-related, EVH1 domain-containing protein 2">
    <location>
        <begin position="1"/>
        <end position="409"/>
    </location>
</feature>
<feature type="domain" description="WH1" evidence="3">
    <location>
        <begin position="5"/>
        <end position="121"/>
    </location>
</feature>
<feature type="domain" description="KBD" evidence="5">
    <location>
        <begin position="199"/>
        <end position="253"/>
    </location>
</feature>
<feature type="domain" description="SPR" evidence="4">
    <location>
        <begin position="299"/>
        <end position="407"/>
    </location>
</feature>
<feature type="region of interest" description="Disordered" evidence="6">
    <location>
        <begin position="121"/>
        <end position="170"/>
    </location>
</feature>
<feature type="compositionally biased region" description="Polar residues" evidence="6">
    <location>
        <begin position="123"/>
        <end position="133"/>
    </location>
</feature>
<feature type="compositionally biased region" description="Low complexity" evidence="6">
    <location>
        <begin position="146"/>
        <end position="155"/>
    </location>
</feature>
<sequence length="409" mass="46148">MSEEAPPEDDSYIVRVKAVVMSRDDSSGGWLPHEGGGLSRVGVSKVYPEGSGRSNFLIHGERLNDKLVLLECYLKKDLVYWKATPTFHHWLVDNRRFGLTFQSPADARAFDRGVRKAIEDLTEGSTTSSSTIHNEAELGDDDVFATSTDSSSNSSQKREPPVRTIASPLPGGHCRYSTLSNIDLPGFEHYPTEQSCARPHRHVSFPDDDDEIVRINPRERNWLTGYEDYRQAPIHRKYPDTESIDSYVRFAKSESTKHDYNYPYVDHTNFGISKDLKTSVINTQPSRCSSRRKDGERSRCIYCRDMFNHDENRRGQCQDAPDSVRNCIRRVSCMGFADCVLYHCMSDSEGDYTDACSCDTSDEKFCLRWMLLIPLSIIAPGMCCYLPLRACYNCGVMCGCCGGKHKAAG</sequence>
<dbReference type="EMBL" id="AY714337">
    <property type="protein sequence ID" value="AAU43766.1"/>
    <property type="molecule type" value="mRNA"/>
</dbReference>
<dbReference type="RefSeq" id="NP_001011032.1">
    <property type="nucleotide sequence ID" value="NM_001011032.1"/>
</dbReference>
<dbReference type="SMR" id="Q5Y171"/>
<dbReference type="FunCoup" id="Q5Y171">
    <property type="interactions" value="1191"/>
</dbReference>
<dbReference type="STRING" id="8364.ENSXETP00000029998"/>
<dbReference type="PaxDb" id="8364-ENSXETP00000030568"/>
<dbReference type="GeneID" id="496441"/>
<dbReference type="KEGG" id="xtr:496441"/>
<dbReference type="AGR" id="Xenbase:XB-GENE-485591"/>
<dbReference type="CTD" id="200734"/>
<dbReference type="Xenbase" id="XB-GENE-485591">
    <property type="gene designation" value="spred2"/>
</dbReference>
<dbReference type="eggNOG" id="KOG4590">
    <property type="taxonomic scope" value="Eukaryota"/>
</dbReference>
<dbReference type="InParanoid" id="Q5Y171"/>
<dbReference type="OMA" id="FEHHRIC"/>
<dbReference type="OrthoDB" id="5786858at2759"/>
<dbReference type="Reactome" id="R-XTR-5658623">
    <property type="pathway name" value="FGFRL1 modulation of FGFR1 signaling"/>
</dbReference>
<dbReference type="Proteomes" id="UP000008143">
    <property type="component" value="Chromosome 5"/>
</dbReference>
<dbReference type="GO" id="GO:0005886">
    <property type="term" value="C:plasma membrane"/>
    <property type="evidence" value="ECO:0007669"/>
    <property type="project" value="UniProtKB-SubCell"/>
</dbReference>
<dbReference type="GO" id="GO:0030658">
    <property type="term" value="C:transport vesicle membrane"/>
    <property type="evidence" value="ECO:0007669"/>
    <property type="project" value="UniProtKB-SubCell"/>
</dbReference>
<dbReference type="GO" id="GO:0009966">
    <property type="term" value="P:regulation of signal transduction"/>
    <property type="evidence" value="ECO:0007669"/>
    <property type="project" value="InterPro"/>
</dbReference>
<dbReference type="CDD" id="cd10574">
    <property type="entry name" value="EVH1_SPRED-like"/>
    <property type="match status" value="1"/>
</dbReference>
<dbReference type="FunFam" id="2.30.29.30:FF:000052">
    <property type="entry name" value="Sprouty-related, EVH1 domain containing 2"/>
    <property type="match status" value="1"/>
</dbReference>
<dbReference type="Gene3D" id="2.30.29.30">
    <property type="entry name" value="Pleckstrin-homology domain (PH domain)/Phosphotyrosine-binding domain (PTB)"/>
    <property type="match status" value="1"/>
</dbReference>
<dbReference type="InterPro" id="IPR023337">
    <property type="entry name" value="KBD"/>
</dbReference>
<dbReference type="InterPro" id="IPR011993">
    <property type="entry name" value="PH-like_dom_sf"/>
</dbReference>
<dbReference type="InterPro" id="IPR041937">
    <property type="entry name" value="SPRE_EVH1"/>
</dbReference>
<dbReference type="InterPro" id="IPR007875">
    <property type="entry name" value="Sprouty"/>
</dbReference>
<dbReference type="InterPro" id="IPR000697">
    <property type="entry name" value="WH1/EVH1_dom"/>
</dbReference>
<dbReference type="PANTHER" id="PTHR11202:SF11">
    <property type="entry name" value="SPROUTY-RELATED, EVH1 DOMAIN-CONTAINING PROTEIN 2"/>
    <property type="match status" value="1"/>
</dbReference>
<dbReference type="PANTHER" id="PTHR11202">
    <property type="entry name" value="SPROUTY-RELATED, EVH1 DOMAIN-CONTAINING PROTEIN FAMILY MEMBER"/>
    <property type="match status" value="1"/>
</dbReference>
<dbReference type="Pfam" id="PF05210">
    <property type="entry name" value="Sprouty"/>
    <property type="match status" value="1"/>
</dbReference>
<dbReference type="Pfam" id="PF00568">
    <property type="entry name" value="WH1"/>
    <property type="match status" value="1"/>
</dbReference>
<dbReference type="SMART" id="SM00461">
    <property type="entry name" value="WH1"/>
    <property type="match status" value="1"/>
</dbReference>
<dbReference type="SUPFAM" id="SSF50729">
    <property type="entry name" value="PH domain-like"/>
    <property type="match status" value="1"/>
</dbReference>
<dbReference type="PROSITE" id="PS51488">
    <property type="entry name" value="KBD"/>
    <property type="match status" value="1"/>
</dbReference>
<dbReference type="PROSITE" id="PS51227">
    <property type="entry name" value="SPR"/>
    <property type="match status" value="1"/>
</dbReference>
<dbReference type="PROSITE" id="PS50229">
    <property type="entry name" value="WH1"/>
    <property type="match status" value="1"/>
</dbReference>
<evidence type="ECO:0000250" key="1">
    <source>
        <dbReference type="UniProtKB" id="Q7Z698"/>
    </source>
</evidence>
<evidence type="ECO:0000250" key="2">
    <source>
        <dbReference type="UniProtKB" id="Q924S7"/>
    </source>
</evidence>
<evidence type="ECO:0000255" key="3">
    <source>
        <dbReference type="PROSITE-ProRule" id="PRU00410"/>
    </source>
</evidence>
<evidence type="ECO:0000255" key="4">
    <source>
        <dbReference type="PROSITE-ProRule" id="PRU00572"/>
    </source>
</evidence>
<evidence type="ECO:0000255" key="5">
    <source>
        <dbReference type="PROSITE-ProRule" id="PRU00821"/>
    </source>
</evidence>
<evidence type="ECO:0000256" key="6">
    <source>
        <dbReference type="SAM" id="MobiDB-lite"/>
    </source>
</evidence>
<gene>
    <name type="primary">spred2</name>
</gene>
<organism>
    <name type="scientific">Xenopus tropicalis</name>
    <name type="common">Western clawed frog</name>
    <name type="synonym">Silurana tropicalis</name>
    <dbReference type="NCBI Taxonomy" id="8364"/>
    <lineage>
        <taxon>Eukaryota</taxon>
        <taxon>Metazoa</taxon>
        <taxon>Chordata</taxon>
        <taxon>Craniata</taxon>
        <taxon>Vertebrata</taxon>
        <taxon>Euteleostomi</taxon>
        <taxon>Amphibia</taxon>
        <taxon>Batrachia</taxon>
        <taxon>Anura</taxon>
        <taxon>Pipoidea</taxon>
        <taxon>Pipidae</taxon>
        <taxon>Xenopodinae</taxon>
        <taxon>Xenopus</taxon>
        <taxon>Silurana</taxon>
    </lineage>
</organism>
<keyword id="KW-1003">Cell membrane</keyword>
<keyword id="KW-0963">Cytoplasm</keyword>
<keyword id="KW-0968">Cytoplasmic vesicle</keyword>
<keyword id="KW-0472">Membrane</keyword>
<keyword id="KW-1185">Reference proteome</keyword>